<gene>
    <name type="primary">mael</name>
</gene>
<protein>
    <recommendedName>
        <fullName>Protein maelstrom homolog</fullName>
    </recommendedName>
</protein>
<feature type="chain" id="PRO_0000367292" description="Protein maelstrom homolog">
    <location>
        <begin position="1"/>
        <end position="415"/>
    </location>
</feature>
<feature type="DNA-binding region" description="HMG box">
    <location>
        <begin position="4"/>
        <end position="73"/>
    </location>
</feature>
<feature type="region of interest" description="Disordered" evidence="2">
    <location>
        <begin position="367"/>
        <end position="399"/>
    </location>
</feature>
<feature type="compositionally biased region" description="Basic and acidic residues" evidence="2">
    <location>
        <begin position="372"/>
        <end position="386"/>
    </location>
</feature>
<sequence>MPNKKAARNAYFFFALDMIPELRRRGLQVSGVREAIPLCSEDWALLSADQKEAYAEKARLLKNDPDSTSTYNDGVFGQRKRNATKSSDFSSVGFFQLNDQRNCVTQRTVPAMNIDISFNKNKAPDQHVCYFINIFSHGDMPSLCEQRYVPCEIACVRYSLREGILGSFHDFIDPGELPRGFRYHCQSGSASTHQIPISGFELANSDYHNMFRKLCSFVCPTPCPVVPVYTKANDIYRVDWCLQWLANKAGMENHFRVQEVETLIIKFYQDKLQEEPSRPTVSRLLDVVQWDYSSNTRCKWHEDNDMWCCALASCKKIAYCISKALASVYGVTLTPAHLPNPERSRNQNSVNPKVVVLDAKRFQRVCSSDPKYSTDKSERSSFEPRGVKPYQGPSGGGRGILRLLETLAASQNSSG</sequence>
<reference key="1">
    <citation type="submission" date="2006-09" db="EMBL/GenBank/DDBJ databases">
        <authorList>
            <consortium name="NIH - Xenopus Gene Collection (XGC) project"/>
        </authorList>
    </citation>
    <scope>NUCLEOTIDE SEQUENCE [LARGE SCALE MRNA]</scope>
    <source>
        <tissue>Testis</tissue>
    </source>
</reference>
<name>MAEL_XENTR</name>
<keyword id="KW-0963">Cytoplasm</keyword>
<keyword id="KW-0217">Developmental protein</keyword>
<keyword id="KW-0221">Differentiation</keyword>
<keyword id="KW-0238">DNA-binding</keyword>
<keyword id="KW-0469">Meiosis</keyword>
<keyword id="KW-0539">Nucleus</keyword>
<keyword id="KW-1185">Reference proteome</keyword>
<keyword id="KW-0943">RNA-mediated gene silencing</keyword>
<keyword id="KW-0744">Spermatogenesis</keyword>
<comment type="function">
    <text evidence="1">Plays a central role during spermatogenesis by repressing transposable elements and preventing their mobilization, which is essential for the germline integrity. Acts via the piRNA metabolic process, which mediates the repression of transposable elements during meiosis by forming complexes composed of piRNAs and Piwi proteins and governs the methylation and subsequent repression of transposons. Its association with piP-bodies suggests a participation in the secondary piRNAs metabolic process. Required for the localization of germ-cell factors to the meiotic nuage (By similarity).</text>
</comment>
<comment type="subcellular location">
    <subcellularLocation>
        <location>Cytoplasm</location>
    </subcellularLocation>
    <subcellularLocation>
        <location>Nucleus</location>
    </subcellularLocation>
    <text evidence="1">Component of the meiotic nuage, also named P granule, a germ-cell-specific organelle required to repress transposon activity during meiosis. Specifically localizes to piP-bodies, a subset of the nuage which contains secondary piRNAs (By similarity).</text>
</comment>
<comment type="similarity">
    <text evidence="3">Belongs to the maelstrom family.</text>
</comment>
<accession>Q08D62</accession>
<proteinExistence type="evidence at transcript level"/>
<evidence type="ECO:0000250" key="1"/>
<evidence type="ECO:0000256" key="2">
    <source>
        <dbReference type="SAM" id="MobiDB-lite"/>
    </source>
</evidence>
<evidence type="ECO:0000305" key="3"/>
<organism>
    <name type="scientific">Xenopus tropicalis</name>
    <name type="common">Western clawed frog</name>
    <name type="synonym">Silurana tropicalis</name>
    <dbReference type="NCBI Taxonomy" id="8364"/>
    <lineage>
        <taxon>Eukaryota</taxon>
        <taxon>Metazoa</taxon>
        <taxon>Chordata</taxon>
        <taxon>Craniata</taxon>
        <taxon>Vertebrata</taxon>
        <taxon>Euteleostomi</taxon>
        <taxon>Amphibia</taxon>
        <taxon>Batrachia</taxon>
        <taxon>Anura</taxon>
        <taxon>Pipoidea</taxon>
        <taxon>Pipidae</taxon>
        <taxon>Xenopodinae</taxon>
        <taxon>Xenopus</taxon>
        <taxon>Silurana</taxon>
    </lineage>
</organism>
<dbReference type="EMBL" id="BC123927">
    <property type="protein sequence ID" value="AAI23928.1"/>
    <property type="molecule type" value="mRNA"/>
</dbReference>
<dbReference type="RefSeq" id="NP_001072645.1">
    <property type="nucleotide sequence ID" value="NM_001079177.1"/>
</dbReference>
<dbReference type="SMR" id="Q08D62"/>
<dbReference type="FunCoup" id="Q08D62">
    <property type="interactions" value="350"/>
</dbReference>
<dbReference type="STRING" id="8364.ENSXETP00000011731"/>
<dbReference type="PaxDb" id="8364-ENSXETP00000045377"/>
<dbReference type="DNASU" id="780102"/>
<dbReference type="GeneID" id="780102"/>
<dbReference type="KEGG" id="xtr:780102"/>
<dbReference type="AGR" id="Xenbase:XB-GENE-997286"/>
<dbReference type="CTD" id="84944"/>
<dbReference type="Xenbase" id="XB-GENE-997286">
    <property type="gene designation" value="mael"/>
</dbReference>
<dbReference type="eggNOG" id="ENOG502QTQB">
    <property type="taxonomic scope" value="Eukaryota"/>
</dbReference>
<dbReference type="HOGENOM" id="CLU_051692_0_0_1"/>
<dbReference type="InParanoid" id="Q08D62"/>
<dbReference type="OMA" id="KHEIFDH"/>
<dbReference type="OrthoDB" id="24555at2759"/>
<dbReference type="Proteomes" id="UP000008143">
    <property type="component" value="Chromosome 2"/>
</dbReference>
<dbReference type="Bgee" id="ENSXETG00000027834">
    <property type="expression patterns" value="Expressed in testis and 10 other cell types or tissues"/>
</dbReference>
<dbReference type="GO" id="GO:0005737">
    <property type="term" value="C:cytoplasm"/>
    <property type="evidence" value="ECO:0000250"/>
    <property type="project" value="UniProtKB"/>
</dbReference>
<dbReference type="GO" id="GO:0005634">
    <property type="term" value="C:nucleus"/>
    <property type="evidence" value="ECO:0000250"/>
    <property type="project" value="UniProtKB"/>
</dbReference>
<dbReference type="GO" id="GO:0043186">
    <property type="term" value="C:P granule"/>
    <property type="evidence" value="ECO:0000250"/>
    <property type="project" value="UniProtKB"/>
</dbReference>
<dbReference type="GO" id="GO:0071547">
    <property type="term" value="C:piP-body"/>
    <property type="evidence" value="ECO:0000250"/>
    <property type="project" value="UniProtKB"/>
</dbReference>
<dbReference type="GO" id="GO:0003677">
    <property type="term" value="F:DNA binding"/>
    <property type="evidence" value="ECO:0007669"/>
    <property type="project" value="UniProtKB-KW"/>
</dbReference>
<dbReference type="GO" id="GO:0030154">
    <property type="term" value="P:cell differentiation"/>
    <property type="evidence" value="ECO:0007669"/>
    <property type="project" value="UniProtKB-KW"/>
</dbReference>
<dbReference type="GO" id="GO:0051321">
    <property type="term" value="P:meiotic cell cycle"/>
    <property type="evidence" value="ECO:0007669"/>
    <property type="project" value="UniProtKB-KW"/>
</dbReference>
<dbReference type="GO" id="GO:0034587">
    <property type="term" value="P:piRNA processing"/>
    <property type="evidence" value="ECO:0000250"/>
    <property type="project" value="UniProtKB"/>
</dbReference>
<dbReference type="GO" id="GO:0060964">
    <property type="term" value="P:regulation of miRNA-mediated gene silencing"/>
    <property type="evidence" value="ECO:0007669"/>
    <property type="project" value="InterPro"/>
</dbReference>
<dbReference type="GO" id="GO:0031047">
    <property type="term" value="P:regulatory ncRNA-mediated gene silencing"/>
    <property type="evidence" value="ECO:0000250"/>
    <property type="project" value="UniProtKB"/>
</dbReference>
<dbReference type="GO" id="GO:0007283">
    <property type="term" value="P:spermatogenesis"/>
    <property type="evidence" value="ECO:0000250"/>
    <property type="project" value="UniProtKB"/>
</dbReference>
<dbReference type="CDD" id="cd21992">
    <property type="entry name" value="HMG-box_MAEL"/>
    <property type="match status" value="1"/>
</dbReference>
<dbReference type="Gene3D" id="1.10.30.10">
    <property type="entry name" value="High mobility group box domain"/>
    <property type="match status" value="1"/>
</dbReference>
<dbReference type="InterPro" id="IPR009071">
    <property type="entry name" value="HMG_box_dom"/>
</dbReference>
<dbReference type="InterPro" id="IPR036910">
    <property type="entry name" value="HMG_box_dom_sf"/>
</dbReference>
<dbReference type="InterPro" id="IPR024970">
    <property type="entry name" value="Maelstrom"/>
</dbReference>
<dbReference type="InterPro" id="IPR039259">
    <property type="entry name" value="Protein_maelstrom"/>
</dbReference>
<dbReference type="PANTHER" id="PTHR21358">
    <property type="entry name" value="PROTEIN MAELSTROM HOMOLOG"/>
    <property type="match status" value="1"/>
</dbReference>
<dbReference type="PANTHER" id="PTHR21358:SF4">
    <property type="entry name" value="PROTEIN MAELSTROM HOMOLOG"/>
    <property type="match status" value="1"/>
</dbReference>
<dbReference type="Pfam" id="PF09011">
    <property type="entry name" value="HMG_box_2"/>
    <property type="match status" value="1"/>
</dbReference>
<dbReference type="Pfam" id="PF13017">
    <property type="entry name" value="Maelstrom"/>
    <property type="match status" value="1"/>
</dbReference>
<dbReference type="SUPFAM" id="SSF47095">
    <property type="entry name" value="HMG-box"/>
    <property type="match status" value="1"/>
</dbReference>